<evidence type="ECO:0000250" key="1"/>
<evidence type="ECO:0000250" key="2">
    <source>
        <dbReference type="UniProtKB" id="O00206"/>
    </source>
</evidence>
<evidence type="ECO:0000250" key="3">
    <source>
        <dbReference type="UniProtKB" id="O60603"/>
    </source>
</evidence>
<evidence type="ECO:0000250" key="4">
    <source>
        <dbReference type="UniProtKB" id="Q9QUN7"/>
    </source>
</evidence>
<evidence type="ECO:0000255" key="5"/>
<evidence type="ECO:0000255" key="6">
    <source>
        <dbReference type="PROSITE-ProRule" id="PRU00204"/>
    </source>
</evidence>
<evidence type="ECO:0000305" key="7"/>
<name>TLR2_MACMU</name>
<comment type="function">
    <text evidence="3 4">Cooperates with LY96 to mediate the innate immune response to bacterial lipoproteins and other microbial cell wall components. Cooperates with TLR1 or TLR6 to mediate the innate immune response to bacterial lipoproteins or lipopeptides. Acts via MYD88 and TRAF6, leading to NF-kappa-B activation, cytokine secretion and the inflammatory response (By similarity). May also promote apoptosis in response to lipoproteins. Forms activation clusters composed of several receptors depending on the ligand, these clusters trigger signaling from the cell surface and subsequently are targeted to the Golgi in a lipid-raft dependent pathway. Forms the cluster TLR2:TLR6:CD14:CD36 in response to diacylated lipopeptides and TLR2:TLR1:CD14 in response to triacylated lipopeptides (By similarity).</text>
</comment>
<comment type="subunit">
    <text evidence="3 4">Interacts with LY96, TLR1 and TLR6 (via extracellular domain). TLR2 seems to exist in heterodimers with either TLR1 or TLR6 before stimulation by the ligand. The heterodimers form bigger oligomers in response to their corresponding ligands as well as further heterotypic associations with other receptors such as CD14 and/or CD36. Binds MYD88 (via TIR domain). Interacts with TICAM1. Interacts with CNPY3. Interacts with ATG16L1. Interacts with PPP1R11. Interacts with TICAM2. Interacts with TIRAP (By similarity).</text>
</comment>
<comment type="subcellular location">
    <subcellularLocation>
        <location evidence="4">Membrane</location>
        <topology evidence="5">Single-pass type I membrane protein</topology>
    </subcellularLocation>
    <subcellularLocation>
        <location evidence="4">Cytoplasmic vesicle</location>
        <location evidence="4">Phagosome membrane</location>
        <topology evidence="5">Single-pass type I membrane protein</topology>
    </subcellularLocation>
    <subcellularLocation>
        <location evidence="3">Membrane raft</location>
    </subcellularLocation>
    <text evidence="3">Does not reside in lipid rafts before stimulation but accumulates increasingly in the raft upon the presence of the microbial ligand. In response to diacylated lipoproteins, TLR2:TLR6 heterodimers are recruited in lipid rafts, this recruitment determine the intracellular targeting to the Golgi apparatus. Triacylated lipoproteins induce the same mechanism for TLR2:TLR1 heterodimers.</text>
</comment>
<comment type="domain">
    <text evidence="1">Ester-bound lipid substrates are bound through a crevice formed between the LRR 11 and LRR 12.</text>
</comment>
<comment type="domain">
    <text evidence="1">The ATG16L1-binding motif mediates interaction with ATG16L1.</text>
</comment>
<comment type="PTM">
    <text evidence="4">Ubiquitinated at Lys-754 by PPP1R11, leading to its degradation. Deubiquitinated by USP2.</text>
</comment>
<comment type="PTM">
    <text evidence="3">Glycosylation of Asn-442 is critical for secretion of the N-terminal ectodomain of TLR2.</text>
</comment>
<comment type="similarity">
    <text evidence="7">Belongs to the Toll-like receptor family.</text>
</comment>
<comment type="caution">
    <text evidence="2 7">In some plant proteins and in human SARM1, the TIR domain has NAD(+) hydrolase (NADase) activity (By similarity). However, despite the presence of the catalytic Asp residue, the isolated TIR domain of human TLR4 lacks NADase activity (By similarity). Based on this, it is unlikely that Toll-like receptors have NADase activity.</text>
</comment>
<keyword id="KW-0968">Cytoplasmic vesicle</keyword>
<keyword id="KW-1015">Disulfide bond</keyword>
<keyword id="KW-0325">Glycoprotein</keyword>
<keyword id="KW-0391">Immunity</keyword>
<keyword id="KW-0395">Inflammatory response</keyword>
<keyword id="KW-0399">Innate immunity</keyword>
<keyword id="KW-1017">Isopeptide bond</keyword>
<keyword id="KW-0433">Leucine-rich repeat</keyword>
<keyword id="KW-0472">Membrane</keyword>
<keyword id="KW-0520">NAD</keyword>
<keyword id="KW-0675">Receptor</keyword>
<keyword id="KW-1185">Reference proteome</keyword>
<keyword id="KW-0677">Repeat</keyword>
<keyword id="KW-0732">Signal</keyword>
<keyword id="KW-0812">Transmembrane</keyword>
<keyword id="KW-1133">Transmembrane helix</keyword>
<keyword id="KW-0832">Ubl conjugation</keyword>
<proteinExistence type="evidence at transcript level"/>
<organism>
    <name type="scientific">Macaca mulatta</name>
    <name type="common">Rhesus macaque</name>
    <dbReference type="NCBI Taxonomy" id="9544"/>
    <lineage>
        <taxon>Eukaryota</taxon>
        <taxon>Metazoa</taxon>
        <taxon>Chordata</taxon>
        <taxon>Craniata</taxon>
        <taxon>Vertebrata</taxon>
        <taxon>Euteleostomi</taxon>
        <taxon>Mammalia</taxon>
        <taxon>Eutheria</taxon>
        <taxon>Euarchontoglires</taxon>
        <taxon>Primates</taxon>
        <taxon>Haplorrhini</taxon>
        <taxon>Catarrhini</taxon>
        <taxon>Cercopithecidae</taxon>
        <taxon>Cercopithecinae</taxon>
        <taxon>Macaca</taxon>
    </lineage>
</organism>
<dbReference type="EMBL" id="AB445630">
    <property type="protein sequence ID" value="BAG55027.1"/>
    <property type="molecule type" value="mRNA"/>
</dbReference>
<dbReference type="RefSeq" id="NP_001123897.1">
    <property type="nucleotide sequence ID" value="NM_001130425.1"/>
</dbReference>
<dbReference type="SMR" id="B3Y618"/>
<dbReference type="FunCoup" id="B3Y618">
    <property type="interactions" value="533"/>
</dbReference>
<dbReference type="STRING" id="9544.ENSMMUP00000020834"/>
<dbReference type="GlyCosmos" id="B3Y618">
    <property type="glycosylation" value="4 sites, No reported glycans"/>
</dbReference>
<dbReference type="PaxDb" id="9544-ENSMMUP00000020834"/>
<dbReference type="GeneID" id="574290"/>
<dbReference type="KEGG" id="mcc:574290"/>
<dbReference type="CTD" id="7097"/>
<dbReference type="eggNOG" id="KOG4641">
    <property type="taxonomic scope" value="Eukaryota"/>
</dbReference>
<dbReference type="InParanoid" id="B3Y618"/>
<dbReference type="OrthoDB" id="1081807at2759"/>
<dbReference type="Proteomes" id="UP000006718">
    <property type="component" value="Unassembled WGS sequence"/>
</dbReference>
<dbReference type="GO" id="GO:0005794">
    <property type="term" value="C:Golgi apparatus"/>
    <property type="evidence" value="ECO:0000250"/>
    <property type="project" value="UniProtKB"/>
</dbReference>
<dbReference type="GO" id="GO:0045121">
    <property type="term" value="C:membrane raft"/>
    <property type="evidence" value="ECO:0000250"/>
    <property type="project" value="UniProtKB"/>
</dbReference>
<dbReference type="GO" id="GO:0030670">
    <property type="term" value="C:phagocytic vesicle membrane"/>
    <property type="evidence" value="ECO:0007669"/>
    <property type="project" value="UniProtKB-SubCell"/>
</dbReference>
<dbReference type="GO" id="GO:0005886">
    <property type="term" value="C:plasma membrane"/>
    <property type="evidence" value="ECO:0000318"/>
    <property type="project" value="GO_Central"/>
</dbReference>
<dbReference type="GO" id="GO:0043235">
    <property type="term" value="C:receptor complex"/>
    <property type="evidence" value="ECO:0000318"/>
    <property type="project" value="GO_Central"/>
</dbReference>
<dbReference type="GO" id="GO:0061809">
    <property type="term" value="F:NAD+ nucleosidase activity, cyclic ADP-ribose generating"/>
    <property type="evidence" value="ECO:0007669"/>
    <property type="project" value="UniProtKB-EC"/>
</dbReference>
<dbReference type="GO" id="GO:0038023">
    <property type="term" value="F:signaling receptor activity"/>
    <property type="evidence" value="ECO:0000318"/>
    <property type="project" value="GO_Central"/>
</dbReference>
<dbReference type="GO" id="GO:0004888">
    <property type="term" value="F:transmembrane signaling receptor activity"/>
    <property type="evidence" value="ECO:0007669"/>
    <property type="project" value="InterPro"/>
</dbReference>
<dbReference type="GO" id="GO:0042497">
    <property type="term" value="F:triacyl lipopeptide binding"/>
    <property type="evidence" value="ECO:0000318"/>
    <property type="project" value="GO_Central"/>
</dbReference>
<dbReference type="GO" id="GO:0071726">
    <property type="term" value="P:cellular response to diacyl bacterial lipopeptide"/>
    <property type="evidence" value="ECO:0000250"/>
    <property type="project" value="UniProtKB"/>
</dbReference>
<dbReference type="GO" id="GO:0071727">
    <property type="term" value="P:cellular response to triacyl bacterial lipopeptide"/>
    <property type="evidence" value="ECO:0000250"/>
    <property type="project" value="UniProtKB"/>
</dbReference>
<dbReference type="GO" id="GO:0006954">
    <property type="term" value="P:inflammatory response"/>
    <property type="evidence" value="ECO:0000318"/>
    <property type="project" value="GO_Central"/>
</dbReference>
<dbReference type="GO" id="GO:0045087">
    <property type="term" value="P:innate immune response"/>
    <property type="evidence" value="ECO:0007669"/>
    <property type="project" value="UniProtKB-KW"/>
</dbReference>
<dbReference type="GO" id="GO:0002224">
    <property type="term" value="P:toll-like receptor signaling pathway"/>
    <property type="evidence" value="ECO:0000318"/>
    <property type="project" value="GO_Central"/>
</dbReference>
<dbReference type="FunFam" id="3.40.50.10140:FF:000001">
    <property type="entry name" value="Toll-like receptor 2"/>
    <property type="match status" value="1"/>
</dbReference>
<dbReference type="FunFam" id="3.80.10.10:FF:000046">
    <property type="entry name" value="Toll-like receptor 2"/>
    <property type="match status" value="1"/>
</dbReference>
<dbReference type="Gene3D" id="3.80.10.10">
    <property type="entry name" value="Ribonuclease Inhibitor"/>
    <property type="match status" value="1"/>
</dbReference>
<dbReference type="Gene3D" id="3.40.50.10140">
    <property type="entry name" value="Toll/interleukin-1 receptor homology (TIR) domain"/>
    <property type="match status" value="1"/>
</dbReference>
<dbReference type="InterPro" id="IPR000483">
    <property type="entry name" value="Cys-rich_flank_reg_C"/>
</dbReference>
<dbReference type="InterPro" id="IPR001611">
    <property type="entry name" value="Leu-rich_rpt"/>
</dbReference>
<dbReference type="InterPro" id="IPR003591">
    <property type="entry name" value="Leu-rich_rpt_typical-subtyp"/>
</dbReference>
<dbReference type="InterPro" id="IPR032675">
    <property type="entry name" value="LRR_dom_sf"/>
</dbReference>
<dbReference type="InterPro" id="IPR000157">
    <property type="entry name" value="TIR_dom"/>
</dbReference>
<dbReference type="InterPro" id="IPR017241">
    <property type="entry name" value="Toll-like_receptor"/>
</dbReference>
<dbReference type="InterPro" id="IPR035897">
    <property type="entry name" value="Toll_tir_struct_dom_sf"/>
</dbReference>
<dbReference type="PANTHER" id="PTHR24365">
    <property type="entry name" value="TOLL-LIKE RECEPTOR"/>
    <property type="match status" value="1"/>
</dbReference>
<dbReference type="PANTHER" id="PTHR24365:SF17">
    <property type="entry name" value="TOLL-LIKE RECEPTOR 2"/>
    <property type="match status" value="1"/>
</dbReference>
<dbReference type="Pfam" id="PF13855">
    <property type="entry name" value="LRR_8"/>
    <property type="match status" value="2"/>
</dbReference>
<dbReference type="Pfam" id="PF01463">
    <property type="entry name" value="LRRCT"/>
    <property type="match status" value="1"/>
</dbReference>
<dbReference type="Pfam" id="PF01582">
    <property type="entry name" value="TIR"/>
    <property type="match status" value="1"/>
</dbReference>
<dbReference type="PIRSF" id="PIRSF037595">
    <property type="entry name" value="Toll-like_receptor"/>
    <property type="match status" value="1"/>
</dbReference>
<dbReference type="PRINTS" id="PR01537">
    <property type="entry name" value="INTRLKN1R1F"/>
</dbReference>
<dbReference type="PRINTS" id="PR00019">
    <property type="entry name" value="LEURICHRPT"/>
</dbReference>
<dbReference type="SMART" id="SM00364">
    <property type="entry name" value="LRR_BAC"/>
    <property type="match status" value="3"/>
</dbReference>
<dbReference type="SMART" id="SM00369">
    <property type="entry name" value="LRR_TYP"/>
    <property type="match status" value="7"/>
</dbReference>
<dbReference type="SMART" id="SM00082">
    <property type="entry name" value="LRRCT"/>
    <property type="match status" value="1"/>
</dbReference>
<dbReference type="SMART" id="SM00255">
    <property type="entry name" value="TIR"/>
    <property type="match status" value="1"/>
</dbReference>
<dbReference type="SUPFAM" id="SSF52058">
    <property type="entry name" value="L domain-like"/>
    <property type="match status" value="1"/>
</dbReference>
<dbReference type="SUPFAM" id="SSF52047">
    <property type="entry name" value="RNI-like"/>
    <property type="match status" value="1"/>
</dbReference>
<dbReference type="SUPFAM" id="SSF52200">
    <property type="entry name" value="Toll/Interleukin receptor TIR domain"/>
    <property type="match status" value="1"/>
</dbReference>
<dbReference type="PROSITE" id="PS51450">
    <property type="entry name" value="LRR"/>
    <property type="match status" value="11"/>
</dbReference>
<dbReference type="PROSITE" id="PS50104">
    <property type="entry name" value="TIR"/>
    <property type="match status" value="1"/>
</dbReference>
<reference key="1">
    <citation type="submission" date="2008-07" db="EMBL/GenBank/DDBJ databases">
        <title>Molecular evolution of the Toll-like receptor-related genes in primates.</title>
        <authorList>
            <person name="Nakajima T."/>
            <person name="Ohtani H."/>
            <person name="Satta Y."/>
            <person name="Uno Y."/>
            <person name="Akari H."/>
            <person name="Ishida T."/>
            <person name="Kimura A."/>
        </authorList>
    </citation>
    <scope>NUCLEOTIDE SEQUENCE [MRNA]</scope>
</reference>
<gene>
    <name type="primary">TLR2</name>
</gene>
<accession>B3Y618</accession>
<protein>
    <recommendedName>
        <fullName>Toll-like receptor 2</fullName>
    </recommendedName>
    <cdAntigenName>CD282</cdAntigenName>
</protein>
<sequence length="784" mass="90071">MPHTLWMVWVLGVIISLSKEESSNQASLSCDHNGICKGSSGSLNSIPSVLTEAVKCLDLSNNRITYISNSDLQRYVNLQALVLTSNGINTIEEDSFSSLGRLEHLDLSYNYLSNLSSSWFKPLSSLKFLNLLGNPYKTLGETSLFSHLTKLRILRVGNMDTFTKIQRKDFAGLTFLEELEIDASDLQSYEPKSLKSIQNVSHLILHMKQHILLLEIFVDLTSSVECLELRDTDLNTFHFSELSTGETNSLIKKFTFRNVKITDESLFQVMKLLSQISGLLELEFDDCTLNGVGDFRGSDNDRVIDPGKVETLTIRRLHIPQFYSFNDLSTLYPLTERVKRITVENSKVFLVPCLLSRHLKSLEYLDLSENLMVEEYLKNSACEDAWPSLQTLILRQNHLASLGKIGETLLTLKNLTNLDISKNTFHYMPETCQWPEKMKYLNLSSTRIHSVTGCIPKTLEILDISNNNLNLFSLNLPQLKELYISRNKLMTLPDASLLPMLLVLKISRNTITTFSKEQLDSFHTLKTLEAGGNNFICSCEFLSFTQEQQALAKVLVDWPANYLCDSPSHVRGQRVQDVRLSVSECHRAALVSGMCCALFLLILLMGVLCHRFHGLWYMKMMWAWLQAKRKPRKAPNRDICYDAFVSYSERDAYWVENLMVQELENFNPPFKLCLHKRDFIPGKWIIDNIIDSIEKSHKTVFVLSENFVKSEWCKYELDFSHFRLFDENNDAAILVLLEPIEKKAIPQRFCKLRKIMNTKTYLEWPMDEARQEGFWVNLRAAIKS</sequence>
<feature type="signal peptide" evidence="5">
    <location>
        <begin position="1"/>
        <end position="20"/>
    </location>
</feature>
<feature type="chain" id="PRO_0000363778" description="Toll-like receptor 2">
    <location>
        <begin position="21"/>
        <end position="784"/>
    </location>
</feature>
<feature type="topological domain" description="Extracellular" evidence="5">
    <location>
        <begin position="21"/>
        <end position="587"/>
    </location>
</feature>
<feature type="transmembrane region" description="Helical" evidence="5">
    <location>
        <begin position="588"/>
        <end position="608"/>
    </location>
</feature>
<feature type="topological domain" description="Cytoplasmic" evidence="5">
    <location>
        <begin position="609"/>
        <end position="784"/>
    </location>
</feature>
<feature type="repeat" description="LRR 1">
    <location>
        <begin position="54"/>
        <end position="77"/>
    </location>
</feature>
<feature type="repeat" description="LRR 2">
    <location>
        <begin position="78"/>
        <end position="101"/>
    </location>
</feature>
<feature type="repeat" description="LRR 3">
    <location>
        <begin position="102"/>
        <end position="125"/>
    </location>
</feature>
<feature type="repeat" description="LRR 4">
    <location>
        <begin position="126"/>
        <end position="150"/>
    </location>
</feature>
<feature type="repeat" description="LRR 5">
    <location>
        <begin position="151"/>
        <end position="175"/>
    </location>
</feature>
<feature type="repeat" description="LRR 6">
    <location>
        <begin position="176"/>
        <end position="199"/>
    </location>
</feature>
<feature type="repeat" description="LRR 7">
    <location>
        <begin position="200"/>
        <end position="223"/>
    </location>
</feature>
<feature type="repeat" description="LRR 8">
    <location>
        <begin position="224"/>
        <end position="250"/>
    </location>
</feature>
<feature type="repeat" description="LRR 9">
    <location>
        <begin position="251"/>
        <end position="278"/>
    </location>
</feature>
<feature type="repeat" description="LRR 10">
    <location>
        <begin position="279"/>
        <end position="308"/>
    </location>
</feature>
<feature type="repeat" description="LRR 11">
    <location>
        <begin position="309"/>
        <end position="337"/>
    </location>
</feature>
<feature type="repeat" description="LRR 12">
    <location>
        <begin position="338"/>
        <end position="361"/>
    </location>
</feature>
<feature type="repeat" description="LRR 13">
    <location>
        <begin position="362"/>
        <end position="388"/>
    </location>
</feature>
<feature type="repeat" description="LRR 14">
    <location>
        <begin position="389"/>
        <end position="414"/>
    </location>
</feature>
<feature type="repeat" description="LRR 15">
    <location>
        <begin position="415"/>
        <end position="437"/>
    </location>
</feature>
<feature type="repeat" description="LRR 16">
    <location>
        <begin position="438"/>
        <end position="457"/>
    </location>
</feature>
<feature type="repeat" description="LRR 17">
    <location>
        <begin position="458"/>
        <end position="478"/>
    </location>
</feature>
<feature type="repeat" description="LRR 18">
    <location>
        <begin position="479"/>
        <end position="500"/>
    </location>
</feature>
<feature type="repeat" description="LRR 19">
    <location>
        <begin position="501"/>
        <end position="524"/>
    </location>
</feature>
<feature type="domain" description="LRRCT">
    <location>
        <begin position="525"/>
        <end position="579"/>
    </location>
</feature>
<feature type="domain" description="TIR" evidence="6">
    <location>
        <begin position="639"/>
        <end position="782"/>
    </location>
</feature>
<feature type="short sequence motif" description="ATG16L1-binding motif">
    <location>
        <begin position="761"/>
        <end position="778"/>
    </location>
</feature>
<feature type="site" description="Interaction with bacterial lipopeptide" evidence="1">
    <location>
        <position position="349"/>
    </location>
</feature>
<feature type="glycosylation site" description="N-linked (GlcNAc...) asparagine" evidence="5">
    <location>
        <position position="114"/>
    </location>
</feature>
<feature type="glycosylation site" description="N-linked (GlcNAc...) asparagine" evidence="5">
    <location>
        <position position="199"/>
    </location>
</feature>
<feature type="glycosylation site" description="N-linked (GlcNAc...) asparagine" evidence="5">
    <location>
        <position position="414"/>
    </location>
</feature>
<feature type="glycosylation site" description="N-linked (GlcNAc...) asparagine" evidence="5">
    <location>
        <position position="442"/>
    </location>
</feature>
<feature type="disulfide bond" evidence="1">
    <location>
        <begin position="30"/>
        <end position="36"/>
    </location>
</feature>
<feature type="disulfide bond" evidence="1">
    <location>
        <begin position="353"/>
        <end position="382"/>
    </location>
</feature>
<feature type="disulfide bond" evidence="1">
    <location>
        <begin position="432"/>
        <end position="454"/>
    </location>
</feature>
<feature type="cross-link" description="Glycyl lysine isopeptide (Lys-Gly) (interchain with G-Cter in ubiquitin)" evidence="3">
    <location>
        <position position="754"/>
    </location>
</feature>